<dbReference type="EC" id="2.7.7.23" evidence="1"/>
<dbReference type="EC" id="2.3.1.157" evidence="1"/>
<dbReference type="EMBL" id="CP000025">
    <property type="protein sequence ID" value="AAW35245.1"/>
    <property type="molecule type" value="Genomic_DNA"/>
</dbReference>
<dbReference type="RefSeq" id="WP_011049785.1">
    <property type="nucleotide sequence ID" value="NC_003912.7"/>
</dbReference>
<dbReference type="SMR" id="Q5HUX5"/>
<dbReference type="KEGG" id="cjr:CJE0908"/>
<dbReference type="HOGENOM" id="CLU_029499_15_2_7"/>
<dbReference type="UniPathway" id="UPA00113">
    <property type="reaction ID" value="UER00532"/>
</dbReference>
<dbReference type="UniPathway" id="UPA00113">
    <property type="reaction ID" value="UER00533"/>
</dbReference>
<dbReference type="UniPathway" id="UPA00973"/>
<dbReference type="GO" id="GO:0005737">
    <property type="term" value="C:cytoplasm"/>
    <property type="evidence" value="ECO:0007669"/>
    <property type="project" value="UniProtKB-SubCell"/>
</dbReference>
<dbReference type="GO" id="GO:0016020">
    <property type="term" value="C:membrane"/>
    <property type="evidence" value="ECO:0007669"/>
    <property type="project" value="GOC"/>
</dbReference>
<dbReference type="GO" id="GO:0019134">
    <property type="term" value="F:glucosamine-1-phosphate N-acetyltransferase activity"/>
    <property type="evidence" value="ECO:0007669"/>
    <property type="project" value="UniProtKB-UniRule"/>
</dbReference>
<dbReference type="GO" id="GO:0000287">
    <property type="term" value="F:magnesium ion binding"/>
    <property type="evidence" value="ECO:0007669"/>
    <property type="project" value="UniProtKB-UniRule"/>
</dbReference>
<dbReference type="GO" id="GO:0003977">
    <property type="term" value="F:UDP-N-acetylglucosamine diphosphorylase activity"/>
    <property type="evidence" value="ECO:0007669"/>
    <property type="project" value="UniProtKB-UniRule"/>
</dbReference>
<dbReference type="GO" id="GO:0000902">
    <property type="term" value="P:cell morphogenesis"/>
    <property type="evidence" value="ECO:0007669"/>
    <property type="project" value="UniProtKB-UniRule"/>
</dbReference>
<dbReference type="GO" id="GO:0071555">
    <property type="term" value="P:cell wall organization"/>
    <property type="evidence" value="ECO:0007669"/>
    <property type="project" value="UniProtKB-KW"/>
</dbReference>
<dbReference type="GO" id="GO:0009245">
    <property type="term" value="P:lipid A biosynthetic process"/>
    <property type="evidence" value="ECO:0007669"/>
    <property type="project" value="UniProtKB-UniRule"/>
</dbReference>
<dbReference type="GO" id="GO:0009252">
    <property type="term" value="P:peptidoglycan biosynthetic process"/>
    <property type="evidence" value="ECO:0007669"/>
    <property type="project" value="UniProtKB-UniRule"/>
</dbReference>
<dbReference type="GO" id="GO:0008360">
    <property type="term" value="P:regulation of cell shape"/>
    <property type="evidence" value="ECO:0007669"/>
    <property type="project" value="UniProtKB-KW"/>
</dbReference>
<dbReference type="GO" id="GO:0006048">
    <property type="term" value="P:UDP-N-acetylglucosamine biosynthetic process"/>
    <property type="evidence" value="ECO:0007669"/>
    <property type="project" value="UniProtKB-UniPathway"/>
</dbReference>
<dbReference type="CDD" id="cd02540">
    <property type="entry name" value="GT2_GlmU_N_bac"/>
    <property type="match status" value="1"/>
</dbReference>
<dbReference type="CDD" id="cd03353">
    <property type="entry name" value="LbH_GlmU_C"/>
    <property type="match status" value="1"/>
</dbReference>
<dbReference type="Gene3D" id="2.160.10.10">
    <property type="entry name" value="Hexapeptide repeat proteins"/>
    <property type="match status" value="1"/>
</dbReference>
<dbReference type="Gene3D" id="3.90.550.10">
    <property type="entry name" value="Spore Coat Polysaccharide Biosynthesis Protein SpsA, Chain A"/>
    <property type="match status" value="1"/>
</dbReference>
<dbReference type="HAMAP" id="MF_01631">
    <property type="entry name" value="GlmU"/>
    <property type="match status" value="1"/>
</dbReference>
<dbReference type="InterPro" id="IPR005882">
    <property type="entry name" value="Bifunctional_GlmU"/>
</dbReference>
<dbReference type="InterPro" id="IPR050065">
    <property type="entry name" value="GlmU-like"/>
</dbReference>
<dbReference type="InterPro" id="IPR038009">
    <property type="entry name" value="GlmU_C_LbH"/>
</dbReference>
<dbReference type="InterPro" id="IPR001451">
    <property type="entry name" value="Hexapep"/>
</dbReference>
<dbReference type="InterPro" id="IPR025877">
    <property type="entry name" value="MobA-like_NTP_Trfase"/>
</dbReference>
<dbReference type="InterPro" id="IPR029044">
    <property type="entry name" value="Nucleotide-diphossugar_trans"/>
</dbReference>
<dbReference type="InterPro" id="IPR011004">
    <property type="entry name" value="Trimer_LpxA-like_sf"/>
</dbReference>
<dbReference type="NCBIfam" id="TIGR01173">
    <property type="entry name" value="glmU"/>
    <property type="match status" value="1"/>
</dbReference>
<dbReference type="NCBIfam" id="NF010939">
    <property type="entry name" value="PRK14359.1"/>
    <property type="match status" value="1"/>
</dbReference>
<dbReference type="PANTHER" id="PTHR43584:SF3">
    <property type="entry name" value="BIFUNCTIONAL PROTEIN GLMU"/>
    <property type="match status" value="1"/>
</dbReference>
<dbReference type="PANTHER" id="PTHR43584">
    <property type="entry name" value="NUCLEOTIDYL TRANSFERASE"/>
    <property type="match status" value="1"/>
</dbReference>
<dbReference type="Pfam" id="PF00132">
    <property type="entry name" value="Hexapep"/>
    <property type="match status" value="1"/>
</dbReference>
<dbReference type="Pfam" id="PF12804">
    <property type="entry name" value="NTP_transf_3"/>
    <property type="match status" value="1"/>
</dbReference>
<dbReference type="SUPFAM" id="SSF53448">
    <property type="entry name" value="Nucleotide-diphospho-sugar transferases"/>
    <property type="match status" value="1"/>
</dbReference>
<dbReference type="SUPFAM" id="SSF51161">
    <property type="entry name" value="Trimeric LpxA-like enzymes"/>
    <property type="match status" value="1"/>
</dbReference>
<name>GLMU_CAMJR</name>
<keyword id="KW-0012">Acyltransferase</keyword>
<keyword id="KW-0133">Cell shape</keyword>
<keyword id="KW-0961">Cell wall biogenesis/degradation</keyword>
<keyword id="KW-0963">Cytoplasm</keyword>
<keyword id="KW-0460">Magnesium</keyword>
<keyword id="KW-0479">Metal-binding</keyword>
<keyword id="KW-0511">Multifunctional enzyme</keyword>
<keyword id="KW-0548">Nucleotidyltransferase</keyword>
<keyword id="KW-0573">Peptidoglycan synthesis</keyword>
<keyword id="KW-0677">Repeat</keyword>
<keyword id="KW-0808">Transferase</keyword>
<organism>
    <name type="scientific">Campylobacter jejuni (strain RM1221)</name>
    <dbReference type="NCBI Taxonomy" id="195099"/>
    <lineage>
        <taxon>Bacteria</taxon>
        <taxon>Pseudomonadati</taxon>
        <taxon>Campylobacterota</taxon>
        <taxon>Epsilonproteobacteria</taxon>
        <taxon>Campylobacterales</taxon>
        <taxon>Campylobacteraceae</taxon>
        <taxon>Campylobacter</taxon>
    </lineage>
</organism>
<comment type="function">
    <text evidence="1">Catalyzes the last two sequential reactions in the de novo biosynthetic pathway for UDP-N-acetylglucosamine (UDP-GlcNAc). The C-terminal domain catalyzes the transfer of acetyl group from acetyl coenzyme A to glucosamine-1-phosphate (GlcN-1-P) to produce N-acetylglucosamine-1-phosphate (GlcNAc-1-P), which is converted into UDP-GlcNAc by the transfer of uridine 5-monophosphate (from uridine 5-triphosphate), a reaction catalyzed by the N-terminal domain.</text>
</comment>
<comment type="catalytic activity">
    <reaction evidence="1">
        <text>alpha-D-glucosamine 1-phosphate + acetyl-CoA = N-acetyl-alpha-D-glucosamine 1-phosphate + CoA + H(+)</text>
        <dbReference type="Rhea" id="RHEA:13725"/>
        <dbReference type="ChEBI" id="CHEBI:15378"/>
        <dbReference type="ChEBI" id="CHEBI:57287"/>
        <dbReference type="ChEBI" id="CHEBI:57288"/>
        <dbReference type="ChEBI" id="CHEBI:57776"/>
        <dbReference type="ChEBI" id="CHEBI:58516"/>
        <dbReference type="EC" id="2.3.1.157"/>
    </reaction>
</comment>
<comment type="catalytic activity">
    <reaction evidence="1">
        <text>N-acetyl-alpha-D-glucosamine 1-phosphate + UTP + H(+) = UDP-N-acetyl-alpha-D-glucosamine + diphosphate</text>
        <dbReference type="Rhea" id="RHEA:13509"/>
        <dbReference type="ChEBI" id="CHEBI:15378"/>
        <dbReference type="ChEBI" id="CHEBI:33019"/>
        <dbReference type="ChEBI" id="CHEBI:46398"/>
        <dbReference type="ChEBI" id="CHEBI:57705"/>
        <dbReference type="ChEBI" id="CHEBI:57776"/>
        <dbReference type="EC" id="2.7.7.23"/>
    </reaction>
</comment>
<comment type="cofactor">
    <cofactor evidence="1">
        <name>Mg(2+)</name>
        <dbReference type="ChEBI" id="CHEBI:18420"/>
    </cofactor>
    <text evidence="1">Binds 1 Mg(2+) ion per subunit.</text>
</comment>
<comment type="pathway">
    <text evidence="1">Nucleotide-sugar biosynthesis; UDP-N-acetyl-alpha-D-glucosamine biosynthesis; N-acetyl-alpha-D-glucosamine 1-phosphate from alpha-D-glucosamine 6-phosphate (route II): step 2/2.</text>
</comment>
<comment type="pathway">
    <text evidence="1">Nucleotide-sugar biosynthesis; UDP-N-acetyl-alpha-D-glucosamine biosynthesis; UDP-N-acetyl-alpha-D-glucosamine from N-acetyl-alpha-D-glucosamine 1-phosphate: step 1/1.</text>
</comment>
<comment type="pathway">
    <text evidence="1">Bacterial outer membrane biogenesis; LPS lipid A biosynthesis.</text>
</comment>
<comment type="subunit">
    <text evidence="1">Homotrimer.</text>
</comment>
<comment type="subcellular location">
    <subcellularLocation>
        <location evidence="1">Cytoplasm</location>
    </subcellularLocation>
</comment>
<comment type="similarity">
    <text evidence="1">In the N-terminal section; belongs to the N-acetylglucosamine-1-phosphate uridyltransferase family.</text>
</comment>
<comment type="similarity">
    <text evidence="1">In the C-terminal section; belongs to the transferase hexapeptide repeat family.</text>
</comment>
<gene>
    <name evidence="1" type="primary">glmU</name>
    <name type="ordered locus">CJE0908</name>
</gene>
<evidence type="ECO:0000255" key="1">
    <source>
        <dbReference type="HAMAP-Rule" id="MF_01631"/>
    </source>
</evidence>
<protein>
    <recommendedName>
        <fullName evidence="1">Bifunctional protein GlmU</fullName>
    </recommendedName>
    <domain>
        <recommendedName>
            <fullName evidence="1">UDP-N-acetylglucosamine pyrophosphorylase</fullName>
            <ecNumber evidence="1">2.7.7.23</ecNumber>
        </recommendedName>
        <alternativeName>
            <fullName evidence="1">N-acetylglucosamine-1-phosphate uridyltransferase</fullName>
        </alternativeName>
    </domain>
    <domain>
        <recommendedName>
            <fullName evidence="1">Glucosamine-1-phosphate N-acetyltransferase</fullName>
            <ecNumber evidence="1">2.3.1.157</ecNumber>
        </recommendedName>
    </domain>
</protein>
<proteinExistence type="inferred from homology"/>
<sequence>MKTSILILAAGLGTRMKSQKPKVLQELCQKSMILHILKKAFALSDDVSVVLSHQKERVEKEILEYFPKTQILEQDLQNYPGTAGALRGFEPKNERVLILCGDMPLVEQTSLEALLSNNAKLNLAVFKARDPKSYGRVVIKNDSVEKIVEFKDANTQEKEINTCNAGVYVIDSRLLKELLPLIDNNNAAKEYYLTDIVKLAKEKDVMIKAVFVDEDEFMGINDKFELSIAENFMQEKIKKYWMQQGVIFHLPQSTFIGADVEFVGECEVYENVRIEGKSKIINSIIKSSSVIENSIVENSDVGPLAHLRPNCELKNTHIGNFVECKNAKLNTVKAGHLSYLGDCEIDSGTNIGCGTITCNYDGVKKYKTIIGKNVFVGSDTQFIAPVKIEDEVIIAAGSTVSVNVEKGALFINRAGHKMIKDYYYKKFQK</sequence>
<feature type="chain" id="PRO_0000233752" description="Bifunctional protein GlmU">
    <location>
        <begin position="1"/>
        <end position="429"/>
    </location>
</feature>
<feature type="region of interest" description="Pyrophosphorylase" evidence="1">
    <location>
        <begin position="1"/>
        <end position="223"/>
    </location>
</feature>
<feature type="region of interest" description="Linker" evidence="1">
    <location>
        <begin position="224"/>
        <end position="244"/>
    </location>
</feature>
<feature type="region of interest" description="N-acetyltransferase" evidence="1">
    <location>
        <begin position="245"/>
        <end position="429"/>
    </location>
</feature>
<feature type="active site" description="Proton acceptor" evidence="1">
    <location>
        <position position="336"/>
    </location>
</feature>
<feature type="binding site" evidence="1">
    <location>
        <begin position="8"/>
        <end position="11"/>
    </location>
    <ligand>
        <name>UDP-N-acetyl-alpha-D-glucosamine</name>
        <dbReference type="ChEBI" id="CHEBI:57705"/>
    </ligand>
</feature>
<feature type="binding site" evidence="1">
    <location>
        <position position="22"/>
    </location>
    <ligand>
        <name>UDP-N-acetyl-alpha-D-glucosamine</name>
        <dbReference type="ChEBI" id="CHEBI:57705"/>
    </ligand>
</feature>
<feature type="binding site" evidence="1">
    <location>
        <begin position="81"/>
        <end position="82"/>
    </location>
    <ligand>
        <name>UDP-N-acetyl-alpha-D-glucosamine</name>
        <dbReference type="ChEBI" id="CHEBI:57705"/>
    </ligand>
</feature>
<feature type="binding site" evidence="1">
    <location>
        <position position="102"/>
    </location>
    <ligand>
        <name>Mg(2+)</name>
        <dbReference type="ChEBI" id="CHEBI:18420"/>
    </ligand>
</feature>
<feature type="binding site" evidence="1">
    <location>
        <position position="135"/>
    </location>
    <ligand>
        <name>UDP-N-acetyl-alpha-D-glucosamine</name>
        <dbReference type="ChEBI" id="CHEBI:57705"/>
    </ligand>
</feature>
<feature type="binding site" evidence="1">
    <location>
        <position position="149"/>
    </location>
    <ligand>
        <name>UDP-N-acetyl-alpha-D-glucosamine</name>
        <dbReference type="ChEBI" id="CHEBI:57705"/>
    </ligand>
</feature>
<feature type="binding site" evidence="1">
    <location>
        <position position="164"/>
    </location>
    <ligand>
        <name>UDP-N-acetyl-alpha-D-glucosamine</name>
        <dbReference type="ChEBI" id="CHEBI:57705"/>
    </ligand>
</feature>
<feature type="binding site" evidence="1">
    <location>
        <position position="221"/>
    </location>
    <ligand>
        <name>Mg(2+)</name>
        <dbReference type="ChEBI" id="CHEBI:18420"/>
    </ligand>
</feature>
<feature type="binding site" evidence="1">
    <location>
        <position position="221"/>
    </location>
    <ligand>
        <name>UDP-N-acetyl-alpha-D-glucosamine</name>
        <dbReference type="ChEBI" id="CHEBI:57705"/>
    </ligand>
</feature>
<feature type="binding site" evidence="1">
    <location>
        <position position="308"/>
    </location>
    <ligand>
        <name>UDP-N-acetyl-alpha-D-glucosamine</name>
        <dbReference type="ChEBI" id="CHEBI:57705"/>
    </ligand>
</feature>
<feature type="binding site" evidence="1">
    <location>
        <position position="325"/>
    </location>
    <ligand>
        <name>UDP-N-acetyl-alpha-D-glucosamine</name>
        <dbReference type="ChEBI" id="CHEBI:57705"/>
    </ligand>
</feature>
<feature type="binding site" evidence="1">
    <location>
        <position position="339"/>
    </location>
    <ligand>
        <name>UDP-N-acetyl-alpha-D-glucosamine</name>
        <dbReference type="ChEBI" id="CHEBI:57705"/>
    </ligand>
</feature>
<feature type="binding site" evidence="1">
    <location>
        <position position="350"/>
    </location>
    <ligand>
        <name>UDP-N-acetyl-alpha-D-glucosamine</name>
        <dbReference type="ChEBI" id="CHEBI:57705"/>
    </ligand>
</feature>
<feature type="binding site" evidence="1">
    <location>
        <begin position="359"/>
        <end position="360"/>
    </location>
    <ligand>
        <name>acetyl-CoA</name>
        <dbReference type="ChEBI" id="CHEBI:57288"/>
    </ligand>
</feature>
<feature type="binding site" evidence="1">
    <location>
        <position position="378"/>
    </location>
    <ligand>
        <name>acetyl-CoA</name>
        <dbReference type="ChEBI" id="CHEBI:57288"/>
    </ligand>
</feature>
<feature type="binding site" evidence="1">
    <location>
        <position position="396"/>
    </location>
    <ligand>
        <name>acetyl-CoA</name>
        <dbReference type="ChEBI" id="CHEBI:57288"/>
    </ligand>
</feature>
<feature type="binding site" evidence="1">
    <location>
        <position position="413"/>
    </location>
    <ligand>
        <name>acetyl-CoA</name>
        <dbReference type="ChEBI" id="CHEBI:57288"/>
    </ligand>
</feature>
<reference key="1">
    <citation type="journal article" date="2005" name="PLoS Biol.">
        <title>Major structural differences and novel potential virulence mechanisms from the genomes of multiple Campylobacter species.</title>
        <authorList>
            <person name="Fouts D.E."/>
            <person name="Mongodin E.F."/>
            <person name="Mandrell R.E."/>
            <person name="Miller W.G."/>
            <person name="Rasko D.A."/>
            <person name="Ravel J."/>
            <person name="Brinkac L.M."/>
            <person name="DeBoy R.T."/>
            <person name="Parker C.T."/>
            <person name="Daugherty S.C."/>
            <person name="Dodson R.J."/>
            <person name="Durkin A.S."/>
            <person name="Madupu R."/>
            <person name="Sullivan S.A."/>
            <person name="Shetty J.U."/>
            <person name="Ayodeji M.A."/>
            <person name="Shvartsbeyn A."/>
            <person name="Schatz M.C."/>
            <person name="Badger J.H."/>
            <person name="Fraser C.M."/>
            <person name="Nelson K.E."/>
        </authorList>
    </citation>
    <scope>NUCLEOTIDE SEQUENCE [LARGE SCALE GENOMIC DNA]</scope>
    <source>
        <strain>RM1221</strain>
    </source>
</reference>
<accession>Q5HUX5</accession>